<organism>
    <name type="scientific">Pseudoderopeltis flavescens</name>
    <name type="common">Cockroach</name>
    <dbReference type="NCBI Taxonomy" id="303916"/>
    <lineage>
        <taxon>Eukaryota</taxon>
        <taxon>Metazoa</taxon>
        <taxon>Ecdysozoa</taxon>
        <taxon>Arthropoda</taxon>
        <taxon>Hexapoda</taxon>
        <taxon>Insecta</taxon>
        <taxon>Pterygota</taxon>
        <taxon>Neoptera</taxon>
        <taxon>Polyneoptera</taxon>
        <taxon>Dictyoptera</taxon>
        <taxon>Blattodea</taxon>
        <taxon>Blattoidea</taxon>
        <taxon>Blattidae</taxon>
        <taxon>Blattinae</taxon>
        <taxon>Pseudoderopeltis</taxon>
    </lineage>
</organism>
<name>PPK5_PSEFV</name>
<proteinExistence type="evidence at protein level"/>
<accession>P85755</accession>
<reference evidence="5" key="1">
    <citation type="journal article" date="2009" name="BMC Evol. Biol.">
        <title>A proteomic approach for studying insect phylogeny: CAPA peptides of ancient insect taxa (Dictyoptera, Blattoptera) as a test case.</title>
        <authorList>
            <person name="Roth S."/>
            <person name="Fromm B."/>
            <person name="Gaede G."/>
            <person name="Predel R."/>
        </authorList>
    </citation>
    <scope>PROTEIN SEQUENCE</scope>
    <scope>AMIDATION AT LEU-18</scope>
    <source>
        <tissue evidence="3">Abdominal perisympathetic organs</tissue>
    </source>
</reference>
<dbReference type="GO" id="GO:0005576">
    <property type="term" value="C:extracellular region"/>
    <property type="evidence" value="ECO:0007669"/>
    <property type="project" value="UniProtKB-SubCell"/>
</dbReference>
<dbReference type="GO" id="GO:0005184">
    <property type="term" value="F:neuropeptide hormone activity"/>
    <property type="evidence" value="ECO:0007669"/>
    <property type="project" value="InterPro"/>
</dbReference>
<dbReference type="GO" id="GO:0007218">
    <property type="term" value="P:neuropeptide signaling pathway"/>
    <property type="evidence" value="ECO:0007669"/>
    <property type="project" value="UniProtKB-KW"/>
</dbReference>
<dbReference type="InterPro" id="IPR001484">
    <property type="entry name" value="Pyrokinin_CS"/>
</dbReference>
<dbReference type="PROSITE" id="PS00539">
    <property type="entry name" value="PYROKININ"/>
    <property type="match status" value="1"/>
</dbReference>
<sequence length="18" mass="1710">GGGGGSGETSGMWFGPRL</sequence>
<keyword id="KW-0027">Amidation</keyword>
<keyword id="KW-0903">Direct protein sequencing</keyword>
<keyword id="KW-0527">Neuropeptide</keyword>
<keyword id="KW-0964">Secreted</keyword>
<comment type="function">
    <text evidence="1">Myoactive.</text>
</comment>
<comment type="subcellular location">
    <subcellularLocation>
        <location evidence="5">Secreted</location>
    </subcellularLocation>
</comment>
<comment type="similarity">
    <text evidence="2">Belongs to the pyrokinin family.</text>
</comment>
<feature type="peptide" id="PRO_0000378722" description="Pyrokinin-5" evidence="3">
    <location>
        <begin position="1"/>
        <end position="18"/>
    </location>
</feature>
<feature type="modified residue" description="Leucine amide" evidence="3">
    <location>
        <position position="18"/>
    </location>
</feature>
<protein>
    <recommendedName>
        <fullName evidence="1">Pyrokinin-5</fullName>
    </recommendedName>
    <alternativeName>
        <fullName evidence="1">FXPRL-amide</fullName>
    </alternativeName>
    <alternativeName>
        <fullName evidence="4">PseFl-Capa-PK</fullName>
    </alternativeName>
</protein>
<evidence type="ECO:0000250" key="1">
    <source>
        <dbReference type="UniProtKB" id="P82617"/>
    </source>
</evidence>
<evidence type="ECO:0000255" key="2"/>
<evidence type="ECO:0000269" key="3">
    <source>
    </source>
</evidence>
<evidence type="ECO:0000303" key="4">
    <source>
    </source>
</evidence>
<evidence type="ECO:0000305" key="5"/>